<accession>B9LZ20</accession>
<protein>
    <recommendedName>
        <fullName evidence="1">Methylthioribose-1-phosphate isomerase</fullName>
        <shortName evidence="1">M1Pi</shortName>
        <shortName evidence="1">MTR-1-P isomerase</shortName>
        <ecNumber evidence="1">5.3.1.23</ecNumber>
    </recommendedName>
    <alternativeName>
        <fullName evidence="1">S-methyl-5-thioribose-1-phosphate isomerase</fullName>
    </alternativeName>
</protein>
<sequence>MSFRTIEWRDNKVVMIDQTRLPGEEVYNVYEDFQSVAEAIRGMIIRGAPAIGVAAAMGVALGAREIIADTYESFSRQLTNVCDVLARTRPTAVNLFWAIERMKRVAESNKDRDLHFIRETLKAEAIRIEEEDLEICRAIGRHGAPLIREGATVLTHCNAGGLATAGYGTALGVIRAAHEAGKNIQVFADETRPWLQGARLTAWELMKDGIPVTLIADNMAGYFMKKGAITACVVGADRIAANGDTANKIGTYSVAVLAKENKIPFYVAAPVSTLDLSLKSGDEIPIEERHACEVTHLQGLPVAPEGVKVRNPAFDVTPAKYIAGIITEKGVVRGDYERELKALVGQ</sequence>
<gene>
    <name evidence="1" type="primary">mtnA</name>
    <name type="ordered locus">Geob_0383</name>
</gene>
<organism>
    <name type="scientific">Geotalea daltonii (strain DSM 22248 / JCM 15807 / FRC-32)</name>
    <name type="common">Geobacter daltonii</name>
    <dbReference type="NCBI Taxonomy" id="316067"/>
    <lineage>
        <taxon>Bacteria</taxon>
        <taxon>Pseudomonadati</taxon>
        <taxon>Thermodesulfobacteriota</taxon>
        <taxon>Desulfuromonadia</taxon>
        <taxon>Geobacterales</taxon>
        <taxon>Geobacteraceae</taxon>
        <taxon>Geotalea</taxon>
    </lineage>
</organism>
<feature type="chain" id="PRO_1000187360" description="Methylthioribose-1-phosphate isomerase">
    <location>
        <begin position="1"/>
        <end position="346"/>
    </location>
</feature>
<feature type="active site" description="Proton donor" evidence="1">
    <location>
        <position position="237"/>
    </location>
</feature>
<feature type="binding site" evidence="1">
    <location>
        <begin position="46"/>
        <end position="48"/>
    </location>
    <ligand>
        <name>substrate</name>
    </ligand>
</feature>
<feature type="binding site" evidence="1">
    <location>
        <position position="89"/>
    </location>
    <ligand>
        <name>substrate</name>
    </ligand>
</feature>
<feature type="binding site" evidence="1">
    <location>
        <position position="196"/>
    </location>
    <ligand>
        <name>substrate</name>
    </ligand>
</feature>
<feature type="binding site" evidence="1">
    <location>
        <begin position="247"/>
        <end position="248"/>
    </location>
    <ligand>
        <name>substrate</name>
    </ligand>
</feature>
<feature type="site" description="Transition state stabilizer" evidence="1">
    <location>
        <position position="157"/>
    </location>
</feature>
<keyword id="KW-0028">Amino-acid biosynthesis</keyword>
<keyword id="KW-0413">Isomerase</keyword>
<keyword id="KW-0486">Methionine biosynthesis</keyword>
<keyword id="KW-1185">Reference proteome</keyword>
<evidence type="ECO:0000255" key="1">
    <source>
        <dbReference type="HAMAP-Rule" id="MF_01678"/>
    </source>
</evidence>
<evidence type="ECO:0000305" key="2"/>
<name>MTNA_GEODF</name>
<proteinExistence type="inferred from homology"/>
<reference key="1">
    <citation type="submission" date="2009-01" db="EMBL/GenBank/DDBJ databases">
        <title>Complete sequence of Geobacter sp. FRC-32.</title>
        <authorList>
            <consortium name="US DOE Joint Genome Institute"/>
            <person name="Lucas S."/>
            <person name="Copeland A."/>
            <person name="Lapidus A."/>
            <person name="Glavina del Rio T."/>
            <person name="Dalin E."/>
            <person name="Tice H."/>
            <person name="Bruce D."/>
            <person name="Goodwin L."/>
            <person name="Pitluck S."/>
            <person name="Saunders E."/>
            <person name="Brettin T."/>
            <person name="Detter J.C."/>
            <person name="Han C."/>
            <person name="Larimer F."/>
            <person name="Land M."/>
            <person name="Hauser L."/>
            <person name="Kyrpides N."/>
            <person name="Ovchinnikova G."/>
            <person name="Kostka J."/>
            <person name="Richardson P."/>
        </authorList>
    </citation>
    <scope>NUCLEOTIDE SEQUENCE [LARGE SCALE GENOMIC DNA]</scope>
    <source>
        <strain>DSM 22248 / JCM 15807 / FRC-32</strain>
    </source>
</reference>
<dbReference type="EC" id="5.3.1.23" evidence="1"/>
<dbReference type="EMBL" id="CP001390">
    <property type="protein sequence ID" value="ACM18752.1"/>
    <property type="molecule type" value="Genomic_DNA"/>
</dbReference>
<dbReference type="RefSeq" id="WP_012645481.1">
    <property type="nucleotide sequence ID" value="NC_011979.1"/>
</dbReference>
<dbReference type="SMR" id="B9LZ20"/>
<dbReference type="STRING" id="316067.Geob_0383"/>
<dbReference type="KEGG" id="geo:Geob_0383"/>
<dbReference type="eggNOG" id="COG0182">
    <property type="taxonomic scope" value="Bacteria"/>
</dbReference>
<dbReference type="HOGENOM" id="CLU_016218_1_2_7"/>
<dbReference type="OrthoDB" id="9803436at2"/>
<dbReference type="UniPathway" id="UPA00904">
    <property type="reaction ID" value="UER00874"/>
</dbReference>
<dbReference type="Proteomes" id="UP000007721">
    <property type="component" value="Chromosome"/>
</dbReference>
<dbReference type="GO" id="GO:0046523">
    <property type="term" value="F:S-methyl-5-thioribose-1-phosphate isomerase activity"/>
    <property type="evidence" value="ECO:0007669"/>
    <property type="project" value="UniProtKB-UniRule"/>
</dbReference>
<dbReference type="GO" id="GO:0019509">
    <property type="term" value="P:L-methionine salvage from methylthioadenosine"/>
    <property type="evidence" value="ECO:0007669"/>
    <property type="project" value="UniProtKB-UniRule"/>
</dbReference>
<dbReference type="FunFam" id="1.20.120.420:FF:000001">
    <property type="entry name" value="Methylthioribose-1-phosphate isomerase"/>
    <property type="match status" value="1"/>
</dbReference>
<dbReference type="FunFam" id="3.40.50.10470:FF:000010">
    <property type="entry name" value="Methylthioribose-1-phosphate isomerase"/>
    <property type="match status" value="1"/>
</dbReference>
<dbReference type="Gene3D" id="1.20.120.420">
    <property type="entry name" value="translation initiation factor eif-2b, domain 1"/>
    <property type="match status" value="1"/>
</dbReference>
<dbReference type="Gene3D" id="3.40.50.10470">
    <property type="entry name" value="Translation initiation factor eif-2b, domain 2"/>
    <property type="match status" value="1"/>
</dbReference>
<dbReference type="HAMAP" id="MF_01678">
    <property type="entry name" value="Salvage_MtnA"/>
    <property type="match status" value="1"/>
</dbReference>
<dbReference type="InterPro" id="IPR000649">
    <property type="entry name" value="IF-2B-related"/>
</dbReference>
<dbReference type="InterPro" id="IPR005251">
    <property type="entry name" value="IF-M1Pi"/>
</dbReference>
<dbReference type="InterPro" id="IPR042529">
    <property type="entry name" value="IF_2B-like_C"/>
</dbReference>
<dbReference type="InterPro" id="IPR011559">
    <property type="entry name" value="Initiation_fac_2B_a/b/d"/>
</dbReference>
<dbReference type="InterPro" id="IPR027363">
    <property type="entry name" value="M1Pi_N"/>
</dbReference>
<dbReference type="InterPro" id="IPR037171">
    <property type="entry name" value="NagB/RpiA_transferase-like"/>
</dbReference>
<dbReference type="NCBIfam" id="TIGR00524">
    <property type="entry name" value="eIF-2B_rel"/>
    <property type="match status" value="1"/>
</dbReference>
<dbReference type="NCBIfam" id="NF004326">
    <property type="entry name" value="PRK05720.1"/>
    <property type="match status" value="1"/>
</dbReference>
<dbReference type="NCBIfam" id="TIGR00512">
    <property type="entry name" value="salvage_mtnA"/>
    <property type="match status" value="1"/>
</dbReference>
<dbReference type="PANTHER" id="PTHR43475">
    <property type="entry name" value="METHYLTHIORIBOSE-1-PHOSPHATE ISOMERASE"/>
    <property type="match status" value="1"/>
</dbReference>
<dbReference type="PANTHER" id="PTHR43475:SF1">
    <property type="entry name" value="METHYLTHIORIBOSE-1-PHOSPHATE ISOMERASE"/>
    <property type="match status" value="1"/>
</dbReference>
<dbReference type="Pfam" id="PF01008">
    <property type="entry name" value="IF-2B"/>
    <property type="match status" value="1"/>
</dbReference>
<dbReference type="SUPFAM" id="SSF100950">
    <property type="entry name" value="NagB/RpiA/CoA transferase-like"/>
    <property type="match status" value="1"/>
</dbReference>
<comment type="function">
    <text evidence="1">Catalyzes the interconversion of methylthioribose-1-phosphate (MTR-1-P) into methylthioribulose-1-phosphate (MTRu-1-P).</text>
</comment>
<comment type="catalytic activity">
    <reaction evidence="1">
        <text>5-(methylsulfanyl)-alpha-D-ribose 1-phosphate = 5-(methylsulfanyl)-D-ribulose 1-phosphate</text>
        <dbReference type="Rhea" id="RHEA:19989"/>
        <dbReference type="ChEBI" id="CHEBI:58533"/>
        <dbReference type="ChEBI" id="CHEBI:58548"/>
        <dbReference type="EC" id="5.3.1.23"/>
    </reaction>
</comment>
<comment type="pathway">
    <text evidence="1">Amino-acid biosynthesis; L-methionine biosynthesis via salvage pathway; L-methionine from S-methyl-5-thio-alpha-D-ribose 1-phosphate: step 1/6.</text>
</comment>
<comment type="similarity">
    <text evidence="2">Belongs to the eIF-2B alpha/beta/delta subunits family. MtnA subfamily.</text>
</comment>